<accession>A5EWZ5</accession>
<feature type="chain" id="PRO_0000303351" description="tRNA N6-adenosine threonylcarbamoyltransferase">
    <location>
        <begin position="1"/>
        <end position="342"/>
    </location>
</feature>
<feature type="binding site" evidence="1">
    <location>
        <position position="115"/>
    </location>
    <ligand>
        <name>Fe cation</name>
        <dbReference type="ChEBI" id="CHEBI:24875"/>
    </ligand>
</feature>
<feature type="binding site" evidence="1">
    <location>
        <position position="119"/>
    </location>
    <ligand>
        <name>Fe cation</name>
        <dbReference type="ChEBI" id="CHEBI:24875"/>
    </ligand>
</feature>
<feature type="binding site" evidence="1">
    <location>
        <begin position="138"/>
        <end position="142"/>
    </location>
    <ligand>
        <name>substrate</name>
    </ligand>
</feature>
<feature type="binding site" evidence="1">
    <location>
        <position position="171"/>
    </location>
    <ligand>
        <name>substrate</name>
    </ligand>
</feature>
<feature type="binding site" evidence="1">
    <location>
        <position position="184"/>
    </location>
    <ligand>
        <name>substrate</name>
    </ligand>
</feature>
<feature type="binding site" evidence="1">
    <location>
        <position position="276"/>
    </location>
    <ligand>
        <name>substrate</name>
    </ligand>
</feature>
<feature type="binding site" evidence="1">
    <location>
        <position position="304"/>
    </location>
    <ligand>
        <name>Fe cation</name>
        <dbReference type="ChEBI" id="CHEBI:24875"/>
    </ligand>
</feature>
<protein>
    <recommendedName>
        <fullName evidence="1">tRNA N6-adenosine threonylcarbamoyltransferase</fullName>
        <ecNumber evidence="1">2.3.1.234</ecNumber>
    </recommendedName>
    <alternativeName>
        <fullName evidence="1">N6-L-threonylcarbamoyladenine synthase</fullName>
        <shortName evidence="1">t(6)A synthase</shortName>
    </alternativeName>
    <alternativeName>
        <fullName evidence="1">t(6)A37 threonylcarbamoyladenosine biosynthesis protein TsaD</fullName>
    </alternativeName>
    <alternativeName>
        <fullName evidence="1">tRNA threonylcarbamoyladenosine biosynthesis protein TsaD</fullName>
    </alternativeName>
</protein>
<proteinExistence type="inferred from homology"/>
<organism>
    <name type="scientific">Dichelobacter nodosus (strain VCS1703A)</name>
    <dbReference type="NCBI Taxonomy" id="246195"/>
    <lineage>
        <taxon>Bacteria</taxon>
        <taxon>Pseudomonadati</taxon>
        <taxon>Pseudomonadota</taxon>
        <taxon>Gammaproteobacteria</taxon>
        <taxon>Cardiobacteriales</taxon>
        <taxon>Cardiobacteriaceae</taxon>
        <taxon>Dichelobacter</taxon>
    </lineage>
</organism>
<name>TSAD_DICNV</name>
<sequence>MSVDINILAIESSCDESGVAIYNPARGVLANQVFSQIDLHRVFGGVVPELAARDHLKRFPVLMNQALTQAKLNLSAIDVIAYTSGPGLLGALMTGATFAHSLAFAIRRPVLKIHHMEGHLLSPFLAPLKPEFPFIALLVSGGHTQLLSVKAVGDYEILGQTLDDAVGEAFDKMAKIMGLPYPGGPELAALAKNGDEQRFVMPRPMINRPDLDFSFSGLKTHVRLLIAEQNNDPQTRADIAASFQKTVVETLLIKCRRAWKKTGYRDLVVSGGVSANQALRAALQKNADEHKKRVFFPPLTLCGDNALMIAHAASFRLQEARIDDDVIDVTARWELSRLSTPL</sequence>
<dbReference type="EC" id="2.3.1.234" evidence="1"/>
<dbReference type="EMBL" id="CP000513">
    <property type="protein sequence ID" value="ABQ14271.1"/>
    <property type="molecule type" value="Genomic_DNA"/>
</dbReference>
<dbReference type="SMR" id="A5EWZ5"/>
<dbReference type="STRING" id="246195.DNO_0018"/>
<dbReference type="KEGG" id="dno:DNO_0018"/>
<dbReference type="eggNOG" id="COG0533">
    <property type="taxonomic scope" value="Bacteria"/>
</dbReference>
<dbReference type="HOGENOM" id="CLU_023208_0_2_6"/>
<dbReference type="OrthoDB" id="9806197at2"/>
<dbReference type="Proteomes" id="UP000000248">
    <property type="component" value="Chromosome"/>
</dbReference>
<dbReference type="GO" id="GO:0005737">
    <property type="term" value="C:cytoplasm"/>
    <property type="evidence" value="ECO:0007669"/>
    <property type="project" value="UniProtKB-SubCell"/>
</dbReference>
<dbReference type="GO" id="GO:0005506">
    <property type="term" value="F:iron ion binding"/>
    <property type="evidence" value="ECO:0007669"/>
    <property type="project" value="UniProtKB-UniRule"/>
</dbReference>
<dbReference type="GO" id="GO:0061711">
    <property type="term" value="F:N(6)-L-threonylcarbamoyladenine synthase activity"/>
    <property type="evidence" value="ECO:0007669"/>
    <property type="project" value="UniProtKB-EC"/>
</dbReference>
<dbReference type="GO" id="GO:0002949">
    <property type="term" value="P:tRNA threonylcarbamoyladenosine modification"/>
    <property type="evidence" value="ECO:0007669"/>
    <property type="project" value="UniProtKB-UniRule"/>
</dbReference>
<dbReference type="CDD" id="cd24133">
    <property type="entry name" value="ASKHA_NBD_TsaD_bac"/>
    <property type="match status" value="1"/>
</dbReference>
<dbReference type="FunFam" id="3.30.420.40:FF:000012">
    <property type="entry name" value="tRNA N6-adenosine threonylcarbamoyltransferase"/>
    <property type="match status" value="1"/>
</dbReference>
<dbReference type="FunFam" id="3.30.420.40:FF:000040">
    <property type="entry name" value="tRNA N6-adenosine threonylcarbamoyltransferase"/>
    <property type="match status" value="1"/>
</dbReference>
<dbReference type="Gene3D" id="3.30.420.40">
    <property type="match status" value="2"/>
</dbReference>
<dbReference type="HAMAP" id="MF_01445">
    <property type="entry name" value="TsaD"/>
    <property type="match status" value="1"/>
</dbReference>
<dbReference type="InterPro" id="IPR043129">
    <property type="entry name" value="ATPase_NBD"/>
</dbReference>
<dbReference type="InterPro" id="IPR000905">
    <property type="entry name" value="Gcp-like_dom"/>
</dbReference>
<dbReference type="InterPro" id="IPR017861">
    <property type="entry name" value="KAE1/TsaD"/>
</dbReference>
<dbReference type="InterPro" id="IPR022450">
    <property type="entry name" value="TsaD"/>
</dbReference>
<dbReference type="NCBIfam" id="TIGR00329">
    <property type="entry name" value="gcp_kae1"/>
    <property type="match status" value="1"/>
</dbReference>
<dbReference type="NCBIfam" id="TIGR03723">
    <property type="entry name" value="T6A_TsaD_YgjD"/>
    <property type="match status" value="1"/>
</dbReference>
<dbReference type="PANTHER" id="PTHR11735">
    <property type="entry name" value="TRNA N6-ADENOSINE THREONYLCARBAMOYLTRANSFERASE"/>
    <property type="match status" value="1"/>
</dbReference>
<dbReference type="PANTHER" id="PTHR11735:SF6">
    <property type="entry name" value="TRNA N6-ADENOSINE THREONYLCARBAMOYLTRANSFERASE, MITOCHONDRIAL"/>
    <property type="match status" value="1"/>
</dbReference>
<dbReference type="Pfam" id="PF00814">
    <property type="entry name" value="TsaD"/>
    <property type="match status" value="1"/>
</dbReference>
<dbReference type="PRINTS" id="PR00789">
    <property type="entry name" value="OSIALOPTASE"/>
</dbReference>
<dbReference type="SUPFAM" id="SSF53067">
    <property type="entry name" value="Actin-like ATPase domain"/>
    <property type="match status" value="2"/>
</dbReference>
<comment type="function">
    <text evidence="1">Required for the formation of a threonylcarbamoyl group on adenosine at position 37 (t(6)A37) in tRNAs that read codons beginning with adenine. Is involved in the transfer of the threonylcarbamoyl moiety of threonylcarbamoyl-AMP (TC-AMP) to the N6 group of A37, together with TsaE and TsaB. TsaD likely plays a direct catalytic role in this reaction.</text>
</comment>
<comment type="catalytic activity">
    <reaction evidence="1">
        <text>L-threonylcarbamoyladenylate + adenosine(37) in tRNA = N(6)-L-threonylcarbamoyladenosine(37) in tRNA + AMP + H(+)</text>
        <dbReference type="Rhea" id="RHEA:37059"/>
        <dbReference type="Rhea" id="RHEA-COMP:10162"/>
        <dbReference type="Rhea" id="RHEA-COMP:10163"/>
        <dbReference type="ChEBI" id="CHEBI:15378"/>
        <dbReference type="ChEBI" id="CHEBI:73682"/>
        <dbReference type="ChEBI" id="CHEBI:74411"/>
        <dbReference type="ChEBI" id="CHEBI:74418"/>
        <dbReference type="ChEBI" id="CHEBI:456215"/>
        <dbReference type="EC" id="2.3.1.234"/>
    </reaction>
</comment>
<comment type="cofactor">
    <cofactor evidence="1">
        <name>Fe(2+)</name>
        <dbReference type="ChEBI" id="CHEBI:29033"/>
    </cofactor>
    <text evidence="1">Binds 1 Fe(2+) ion per subunit.</text>
</comment>
<comment type="subcellular location">
    <subcellularLocation>
        <location evidence="1">Cytoplasm</location>
    </subcellularLocation>
</comment>
<comment type="similarity">
    <text evidence="1">Belongs to the KAE1 / TsaD family.</text>
</comment>
<gene>
    <name evidence="1" type="primary">tsaD</name>
    <name type="synonym">gcp</name>
    <name type="ordered locus">DNO_0018</name>
</gene>
<keyword id="KW-0012">Acyltransferase</keyword>
<keyword id="KW-0963">Cytoplasm</keyword>
<keyword id="KW-0408">Iron</keyword>
<keyword id="KW-0479">Metal-binding</keyword>
<keyword id="KW-1185">Reference proteome</keyword>
<keyword id="KW-0808">Transferase</keyword>
<keyword id="KW-0819">tRNA processing</keyword>
<reference key="1">
    <citation type="journal article" date="2007" name="Nat. Biotechnol.">
        <title>Genome sequence and identification of candidate vaccine antigens from the animal pathogen Dichelobacter nodosus.</title>
        <authorList>
            <person name="Myers G.S.A."/>
            <person name="Parker D."/>
            <person name="Al-Hasani K."/>
            <person name="Kennan R.M."/>
            <person name="Seemann T."/>
            <person name="Ren Q."/>
            <person name="Badger J.H."/>
            <person name="Selengut J.D."/>
            <person name="Deboy R.T."/>
            <person name="Tettelin H."/>
            <person name="Boyce J.D."/>
            <person name="McCarl V.P."/>
            <person name="Han X."/>
            <person name="Nelson W.C."/>
            <person name="Madupu R."/>
            <person name="Mohamoud Y."/>
            <person name="Holley T."/>
            <person name="Fedorova N."/>
            <person name="Khouri H."/>
            <person name="Bottomley S.P."/>
            <person name="Whittington R.J."/>
            <person name="Adler B."/>
            <person name="Songer J.G."/>
            <person name="Rood J.I."/>
            <person name="Paulsen I.T."/>
        </authorList>
    </citation>
    <scope>NUCLEOTIDE SEQUENCE [LARGE SCALE GENOMIC DNA]</scope>
    <source>
        <strain>VCS1703A</strain>
    </source>
</reference>
<evidence type="ECO:0000255" key="1">
    <source>
        <dbReference type="HAMAP-Rule" id="MF_01445"/>
    </source>
</evidence>